<protein>
    <recommendedName>
        <fullName evidence="1">Co-chaperonin GroES</fullName>
    </recommendedName>
    <alternativeName>
        <fullName evidence="1">10 kDa chaperonin</fullName>
    </alternativeName>
    <alternativeName>
        <fullName evidence="1">Chaperonin-10</fullName>
        <shortName evidence="1">Cpn10</shortName>
    </alternativeName>
</protein>
<sequence>MANVNIKPLEDKILVQINEAETTTASGLVIPDSAKEKPQEATVIAVGPGRFDDKGNRIPLDIKEDDVVIFSRYGGTEIKFGGVEYLLLSARDILAIVEK</sequence>
<accession>A4QBT9</accession>
<feature type="chain" id="PRO_1000025244" description="Co-chaperonin GroES">
    <location>
        <begin position="1"/>
        <end position="99"/>
    </location>
</feature>
<proteinExistence type="inferred from homology"/>
<dbReference type="EMBL" id="AP009044">
    <property type="protein sequence ID" value="BAF53686.1"/>
    <property type="molecule type" value="Genomic_DNA"/>
</dbReference>
<dbReference type="RefSeq" id="WP_003854559.1">
    <property type="nucleotide sequence ID" value="NC_009342.1"/>
</dbReference>
<dbReference type="SMR" id="A4QBT9"/>
<dbReference type="GeneID" id="1018601"/>
<dbReference type="KEGG" id="cgt:cgR_0715"/>
<dbReference type="HOGENOM" id="CLU_132825_2_0_11"/>
<dbReference type="PhylomeDB" id="A4QBT9"/>
<dbReference type="Proteomes" id="UP000006698">
    <property type="component" value="Chromosome"/>
</dbReference>
<dbReference type="GO" id="GO:0005737">
    <property type="term" value="C:cytoplasm"/>
    <property type="evidence" value="ECO:0007669"/>
    <property type="project" value="UniProtKB-SubCell"/>
</dbReference>
<dbReference type="GO" id="GO:0005524">
    <property type="term" value="F:ATP binding"/>
    <property type="evidence" value="ECO:0007669"/>
    <property type="project" value="InterPro"/>
</dbReference>
<dbReference type="GO" id="GO:0046872">
    <property type="term" value="F:metal ion binding"/>
    <property type="evidence" value="ECO:0007669"/>
    <property type="project" value="TreeGrafter"/>
</dbReference>
<dbReference type="GO" id="GO:0044183">
    <property type="term" value="F:protein folding chaperone"/>
    <property type="evidence" value="ECO:0007669"/>
    <property type="project" value="InterPro"/>
</dbReference>
<dbReference type="GO" id="GO:0051087">
    <property type="term" value="F:protein-folding chaperone binding"/>
    <property type="evidence" value="ECO:0007669"/>
    <property type="project" value="TreeGrafter"/>
</dbReference>
<dbReference type="GO" id="GO:0051082">
    <property type="term" value="F:unfolded protein binding"/>
    <property type="evidence" value="ECO:0007669"/>
    <property type="project" value="TreeGrafter"/>
</dbReference>
<dbReference type="GO" id="GO:0051085">
    <property type="term" value="P:chaperone cofactor-dependent protein refolding"/>
    <property type="evidence" value="ECO:0007669"/>
    <property type="project" value="TreeGrafter"/>
</dbReference>
<dbReference type="CDD" id="cd00320">
    <property type="entry name" value="cpn10"/>
    <property type="match status" value="1"/>
</dbReference>
<dbReference type="FunFam" id="2.30.33.40:FF:000001">
    <property type="entry name" value="10 kDa chaperonin"/>
    <property type="match status" value="1"/>
</dbReference>
<dbReference type="Gene3D" id="2.30.33.40">
    <property type="entry name" value="GroES chaperonin"/>
    <property type="match status" value="1"/>
</dbReference>
<dbReference type="HAMAP" id="MF_00580">
    <property type="entry name" value="CH10"/>
    <property type="match status" value="1"/>
</dbReference>
<dbReference type="InterPro" id="IPR020818">
    <property type="entry name" value="Chaperonin_GroES"/>
</dbReference>
<dbReference type="InterPro" id="IPR037124">
    <property type="entry name" value="Chaperonin_GroES_sf"/>
</dbReference>
<dbReference type="InterPro" id="IPR018369">
    <property type="entry name" value="Chaprnonin_Cpn10_CS"/>
</dbReference>
<dbReference type="InterPro" id="IPR011032">
    <property type="entry name" value="GroES-like_sf"/>
</dbReference>
<dbReference type="NCBIfam" id="NF001530">
    <property type="entry name" value="PRK00364.1-6"/>
    <property type="match status" value="1"/>
</dbReference>
<dbReference type="NCBIfam" id="NF001531">
    <property type="entry name" value="PRK00364.2-2"/>
    <property type="match status" value="1"/>
</dbReference>
<dbReference type="NCBIfam" id="NF001533">
    <property type="entry name" value="PRK00364.2-4"/>
    <property type="match status" value="1"/>
</dbReference>
<dbReference type="NCBIfam" id="NF001534">
    <property type="entry name" value="PRK00364.2-5"/>
    <property type="match status" value="1"/>
</dbReference>
<dbReference type="PANTHER" id="PTHR10772">
    <property type="entry name" value="10 KDA HEAT SHOCK PROTEIN"/>
    <property type="match status" value="1"/>
</dbReference>
<dbReference type="PANTHER" id="PTHR10772:SF58">
    <property type="entry name" value="CO-CHAPERONIN GROES"/>
    <property type="match status" value="1"/>
</dbReference>
<dbReference type="Pfam" id="PF00166">
    <property type="entry name" value="Cpn10"/>
    <property type="match status" value="1"/>
</dbReference>
<dbReference type="PRINTS" id="PR00297">
    <property type="entry name" value="CHAPERONIN10"/>
</dbReference>
<dbReference type="SMART" id="SM00883">
    <property type="entry name" value="Cpn10"/>
    <property type="match status" value="1"/>
</dbReference>
<dbReference type="SUPFAM" id="SSF50129">
    <property type="entry name" value="GroES-like"/>
    <property type="match status" value="1"/>
</dbReference>
<dbReference type="PROSITE" id="PS00681">
    <property type="entry name" value="CHAPERONINS_CPN10"/>
    <property type="match status" value="1"/>
</dbReference>
<reference key="1">
    <citation type="journal article" date="2007" name="Microbiology">
        <title>Comparative analysis of the Corynebacterium glutamicum group and complete genome sequence of strain R.</title>
        <authorList>
            <person name="Yukawa H."/>
            <person name="Omumasaba C.A."/>
            <person name="Nonaka H."/>
            <person name="Kos P."/>
            <person name="Okai N."/>
            <person name="Suzuki N."/>
            <person name="Suda M."/>
            <person name="Tsuge Y."/>
            <person name="Watanabe J."/>
            <person name="Ikeda Y."/>
            <person name="Vertes A.A."/>
            <person name="Inui M."/>
        </authorList>
    </citation>
    <scope>NUCLEOTIDE SEQUENCE [LARGE SCALE GENOMIC DNA]</scope>
    <source>
        <strain>R</strain>
    </source>
</reference>
<organism>
    <name type="scientific">Corynebacterium glutamicum (strain R)</name>
    <dbReference type="NCBI Taxonomy" id="340322"/>
    <lineage>
        <taxon>Bacteria</taxon>
        <taxon>Bacillati</taxon>
        <taxon>Actinomycetota</taxon>
        <taxon>Actinomycetes</taxon>
        <taxon>Mycobacteriales</taxon>
        <taxon>Corynebacteriaceae</taxon>
        <taxon>Corynebacterium</taxon>
    </lineage>
</organism>
<keyword id="KW-0143">Chaperone</keyword>
<keyword id="KW-0963">Cytoplasm</keyword>
<name>CH10_CORGB</name>
<comment type="function">
    <text evidence="1">Together with the chaperonin GroEL, plays an essential role in assisting protein folding. The GroEL-GroES system forms a nano-cage that allows encapsulation of the non-native substrate proteins and provides a physical environment optimized to promote and accelerate protein folding. GroES binds to the apical surface of the GroEL ring, thereby capping the opening of the GroEL channel.</text>
</comment>
<comment type="subunit">
    <text evidence="1">Heptamer of 7 subunits arranged in a ring. Interacts with the chaperonin GroEL.</text>
</comment>
<comment type="subcellular location">
    <subcellularLocation>
        <location evidence="1">Cytoplasm</location>
    </subcellularLocation>
</comment>
<comment type="similarity">
    <text evidence="1">Belongs to the GroES chaperonin family.</text>
</comment>
<gene>
    <name evidence="1" type="primary">groES</name>
    <name evidence="1" type="synonym">groS</name>
    <name type="ordered locus">cgR_0715</name>
</gene>
<evidence type="ECO:0000255" key="1">
    <source>
        <dbReference type="HAMAP-Rule" id="MF_00580"/>
    </source>
</evidence>